<sequence>MSNDSSECSQKLPKLKRILLKLSGESLSADQGFGINVESAQPIINQIKTLTNFGVELALVVGGGNILRGGRANFGNKIRRATADSMGMIATMINALALRDMLISEGVDAEVFSAKGVDGLLKVASAHEFNQELAKGRVLIFAGGTGNPFVTTDTTASLRAVEIGADALLKATTVNGVYDKDPNKYSDAKRFDKVTFSEVVSKELNVMDLGAFTQCRDFSIPIYVFDLTQPNALVDAVLDSKYGTWVTLD</sequence>
<accession>Q2A5I0</accession>
<evidence type="ECO:0000255" key="1">
    <source>
        <dbReference type="HAMAP-Rule" id="MF_01220"/>
    </source>
</evidence>
<keyword id="KW-0067">ATP-binding</keyword>
<keyword id="KW-0963">Cytoplasm</keyword>
<keyword id="KW-0418">Kinase</keyword>
<keyword id="KW-0547">Nucleotide-binding</keyword>
<keyword id="KW-0665">Pyrimidine biosynthesis</keyword>
<keyword id="KW-1185">Reference proteome</keyword>
<keyword id="KW-0808">Transferase</keyword>
<proteinExistence type="inferred from homology"/>
<name>PYRH_FRATH</name>
<organism>
    <name type="scientific">Francisella tularensis subsp. holarctica (strain LVS)</name>
    <dbReference type="NCBI Taxonomy" id="376619"/>
    <lineage>
        <taxon>Bacteria</taxon>
        <taxon>Pseudomonadati</taxon>
        <taxon>Pseudomonadota</taxon>
        <taxon>Gammaproteobacteria</taxon>
        <taxon>Thiotrichales</taxon>
        <taxon>Francisellaceae</taxon>
        <taxon>Francisella</taxon>
    </lineage>
</organism>
<dbReference type="EC" id="2.7.4.22" evidence="1"/>
<dbReference type="EMBL" id="AM233362">
    <property type="protein sequence ID" value="CAJ78667.1"/>
    <property type="molecule type" value="Genomic_DNA"/>
</dbReference>
<dbReference type="RefSeq" id="WP_003014296.1">
    <property type="nucleotide sequence ID" value="NZ_CP009694.1"/>
</dbReference>
<dbReference type="SMR" id="Q2A5I0"/>
<dbReference type="KEGG" id="ftl:FTL_0226"/>
<dbReference type="UniPathway" id="UPA00159">
    <property type="reaction ID" value="UER00275"/>
</dbReference>
<dbReference type="Proteomes" id="UP000001944">
    <property type="component" value="Chromosome"/>
</dbReference>
<dbReference type="GO" id="GO:0005737">
    <property type="term" value="C:cytoplasm"/>
    <property type="evidence" value="ECO:0007669"/>
    <property type="project" value="UniProtKB-SubCell"/>
</dbReference>
<dbReference type="GO" id="GO:0005524">
    <property type="term" value="F:ATP binding"/>
    <property type="evidence" value="ECO:0007669"/>
    <property type="project" value="UniProtKB-KW"/>
</dbReference>
<dbReference type="GO" id="GO:0033862">
    <property type="term" value="F:UMP kinase activity"/>
    <property type="evidence" value="ECO:0007669"/>
    <property type="project" value="UniProtKB-EC"/>
</dbReference>
<dbReference type="GO" id="GO:0044210">
    <property type="term" value="P:'de novo' CTP biosynthetic process"/>
    <property type="evidence" value="ECO:0007669"/>
    <property type="project" value="UniProtKB-UniRule"/>
</dbReference>
<dbReference type="GO" id="GO:0006225">
    <property type="term" value="P:UDP biosynthetic process"/>
    <property type="evidence" value="ECO:0007669"/>
    <property type="project" value="TreeGrafter"/>
</dbReference>
<dbReference type="CDD" id="cd04254">
    <property type="entry name" value="AAK_UMPK-PyrH-Ec"/>
    <property type="match status" value="1"/>
</dbReference>
<dbReference type="FunFam" id="3.40.1160.10:FF:000001">
    <property type="entry name" value="Uridylate kinase"/>
    <property type="match status" value="1"/>
</dbReference>
<dbReference type="Gene3D" id="3.40.1160.10">
    <property type="entry name" value="Acetylglutamate kinase-like"/>
    <property type="match status" value="1"/>
</dbReference>
<dbReference type="HAMAP" id="MF_01220_B">
    <property type="entry name" value="PyrH_B"/>
    <property type="match status" value="1"/>
</dbReference>
<dbReference type="InterPro" id="IPR036393">
    <property type="entry name" value="AceGlu_kinase-like_sf"/>
</dbReference>
<dbReference type="InterPro" id="IPR001048">
    <property type="entry name" value="Asp/Glu/Uridylate_kinase"/>
</dbReference>
<dbReference type="InterPro" id="IPR011817">
    <property type="entry name" value="Uridylate_kinase"/>
</dbReference>
<dbReference type="InterPro" id="IPR015963">
    <property type="entry name" value="Uridylate_kinase_bac"/>
</dbReference>
<dbReference type="NCBIfam" id="TIGR02075">
    <property type="entry name" value="pyrH_bact"/>
    <property type="match status" value="1"/>
</dbReference>
<dbReference type="PANTHER" id="PTHR42833">
    <property type="entry name" value="URIDYLATE KINASE"/>
    <property type="match status" value="1"/>
</dbReference>
<dbReference type="PANTHER" id="PTHR42833:SF4">
    <property type="entry name" value="URIDYLATE KINASE PUMPKIN, CHLOROPLASTIC"/>
    <property type="match status" value="1"/>
</dbReference>
<dbReference type="Pfam" id="PF00696">
    <property type="entry name" value="AA_kinase"/>
    <property type="match status" value="1"/>
</dbReference>
<dbReference type="PIRSF" id="PIRSF005650">
    <property type="entry name" value="Uridylate_kin"/>
    <property type="match status" value="1"/>
</dbReference>
<dbReference type="SUPFAM" id="SSF53633">
    <property type="entry name" value="Carbamate kinase-like"/>
    <property type="match status" value="1"/>
</dbReference>
<feature type="chain" id="PRO_0000323849" description="Uridylate kinase">
    <location>
        <begin position="1"/>
        <end position="249"/>
    </location>
</feature>
<feature type="binding site" evidence="1">
    <location>
        <begin position="21"/>
        <end position="24"/>
    </location>
    <ligand>
        <name>ATP</name>
        <dbReference type="ChEBI" id="CHEBI:30616"/>
    </ligand>
</feature>
<feature type="binding site" evidence="1">
    <location>
        <position position="63"/>
    </location>
    <ligand>
        <name>UMP</name>
        <dbReference type="ChEBI" id="CHEBI:57865"/>
    </ligand>
</feature>
<feature type="binding site" evidence="1">
    <location>
        <position position="64"/>
    </location>
    <ligand>
        <name>ATP</name>
        <dbReference type="ChEBI" id="CHEBI:30616"/>
    </ligand>
</feature>
<feature type="binding site" evidence="1">
    <location>
        <position position="68"/>
    </location>
    <ligand>
        <name>ATP</name>
        <dbReference type="ChEBI" id="CHEBI:30616"/>
    </ligand>
</feature>
<feature type="binding site" evidence="1">
    <location>
        <position position="84"/>
    </location>
    <ligand>
        <name>UMP</name>
        <dbReference type="ChEBI" id="CHEBI:57865"/>
    </ligand>
</feature>
<feature type="binding site" evidence="1">
    <location>
        <begin position="145"/>
        <end position="152"/>
    </location>
    <ligand>
        <name>UMP</name>
        <dbReference type="ChEBI" id="CHEBI:57865"/>
    </ligand>
</feature>
<feature type="binding site" evidence="1">
    <location>
        <position position="172"/>
    </location>
    <ligand>
        <name>ATP</name>
        <dbReference type="ChEBI" id="CHEBI:30616"/>
    </ligand>
</feature>
<feature type="binding site" evidence="1">
    <location>
        <position position="178"/>
    </location>
    <ligand>
        <name>ATP</name>
        <dbReference type="ChEBI" id="CHEBI:30616"/>
    </ligand>
</feature>
<feature type="binding site" evidence="1">
    <location>
        <position position="181"/>
    </location>
    <ligand>
        <name>ATP</name>
        <dbReference type="ChEBI" id="CHEBI:30616"/>
    </ligand>
</feature>
<comment type="function">
    <text evidence="1">Catalyzes the reversible phosphorylation of UMP to UDP.</text>
</comment>
<comment type="catalytic activity">
    <reaction evidence="1">
        <text>UMP + ATP = UDP + ADP</text>
        <dbReference type="Rhea" id="RHEA:24400"/>
        <dbReference type="ChEBI" id="CHEBI:30616"/>
        <dbReference type="ChEBI" id="CHEBI:57865"/>
        <dbReference type="ChEBI" id="CHEBI:58223"/>
        <dbReference type="ChEBI" id="CHEBI:456216"/>
        <dbReference type="EC" id="2.7.4.22"/>
    </reaction>
</comment>
<comment type="activity regulation">
    <text evidence="1">Inhibited by UTP.</text>
</comment>
<comment type="pathway">
    <text evidence="1">Pyrimidine metabolism; CTP biosynthesis via de novo pathway; UDP from UMP (UMPK route): step 1/1.</text>
</comment>
<comment type="subunit">
    <text evidence="1">Homohexamer.</text>
</comment>
<comment type="subcellular location">
    <subcellularLocation>
        <location evidence="1">Cytoplasm</location>
    </subcellularLocation>
</comment>
<comment type="similarity">
    <text evidence="1">Belongs to the UMP kinase family.</text>
</comment>
<protein>
    <recommendedName>
        <fullName evidence="1">Uridylate kinase</fullName>
        <shortName evidence="1">UK</shortName>
        <ecNumber evidence="1">2.7.4.22</ecNumber>
    </recommendedName>
    <alternativeName>
        <fullName evidence="1">Uridine monophosphate kinase</fullName>
        <shortName evidence="1">UMP kinase</shortName>
        <shortName evidence="1">UMPK</shortName>
    </alternativeName>
</protein>
<gene>
    <name evidence="1" type="primary">pyrH</name>
    <name type="ordered locus">FTL_0226</name>
</gene>
<reference key="1">
    <citation type="submission" date="2006-03" db="EMBL/GenBank/DDBJ databases">
        <title>Complete genome sequence of Francisella tularensis LVS (Live Vaccine Strain).</title>
        <authorList>
            <person name="Chain P."/>
            <person name="Larimer F."/>
            <person name="Land M."/>
            <person name="Stilwagen S."/>
            <person name="Larsson P."/>
            <person name="Bearden S."/>
            <person name="Chu M."/>
            <person name="Oyston P."/>
            <person name="Forsman M."/>
            <person name="Andersson S."/>
            <person name="Lindler L."/>
            <person name="Titball R."/>
            <person name="Garcia E."/>
        </authorList>
    </citation>
    <scope>NUCLEOTIDE SEQUENCE [LARGE SCALE GENOMIC DNA]</scope>
    <source>
        <strain>LVS</strain>
    </source>
</reference>